<organism>
    <name type="scientific">Escherichia coli O6:K15:H31 (strain 536 / UPEC)</name>
    <dbReference type="NCBI Taxonomy" id="362663"/>
    <lineage>
        <taxon>Bacteria</taxon>
        <taxon>Pseudomonadati</taxon>
        <taxon>Pseudomonadota</taxon>
        <taxon>Gammaproteobacteria</taxon>
        <taxon>Enterobacterales</taxon>
        <taxon>Enterobacteriaceae</taxon>
        <taxon>Escherichia</taxon>
    </lineage>
</organism>
<evidence type="ECO:0000255" key="1">
    <source>
        <dbReference type="HAMAP-Rule" id="MF_01396"/>
    </source>
</evidence>
<reference key="1">
    <citation type="journal article" date="2006" name="Mol. Microbiol.">
        <title>Role of pathogenicity island-associated integrases in the genome plasticity of uropathogenic Escherichia coli strain 536.</title>
        <authorList>
            <person name="Hochhut B."/>
            <person name="Wilde C."/>
            <person name="Balling G."/>
            <person name="Middendorf B."/>
            <person name="Dobrindt U."/>
            <person name="Brzuszkiewicz E."/>
            <person name="Gottschalk G."/>
            <person name="Carniel E."/>
            <person name="Hacker J."/>
        </authorList>
    </citation>
    <scope>NUCLEOTIDE SEQUENCE [LARGE SCALE GENOMIC DNA]</scope>
    <source>
        <strain>536 / UPEC</strain>
    </source>
</reference>
<gene>
    <name evidence="1" type="primary">atpE</name>
    <name type="ordered locus">ECP_3936</name>
</gene>
<keyword id="KW-0066">ATP synthesis</keyword>
<keyword id="KW-0997">Cell inner membrane</keyword>
<keyword id="KW-1003">Cell membrane</keyword>
<keyword id="KW-0138">CF(0)</keyword>
<keyword id="KW-0375">Hydrogen ion transport</keyword>
<keyword id="KW-0406">Ion transport</keyword>
<keyword id="KW-0446">Lipid-binding</keyword>
<keyword id="KW-0472">Membrane</keyword>
<keyword id="KW-0812">Transmembrane</keyword>
<keyword id="KW-1133">Transmembrane helix</keyword>
<keyword id="KW-0813">Transport</keyword>
<protein>
    <recommendedName>
        <fullName evidence="1">ATP synthase subunit c</fullName>
    </recommendedName>
    <alternativeName>
        <fullName evidence="1">ATP synthase F(0) sector subunit c</fullName>
    </alternativeName>
    <alternativeName>
        <fullName evidence="1">F-type ATPase subunit c</fullName>
        <shortName evidence="1">F-ATPase subunit c</shortName>
    </alternativeName>
    <alternativeName>
        <fullName evidence="1">Lipid-binding protein</fullName>
    </alternativeName>
</protein>
<dbReference type="EMBL" id="CP000247">
    <property type="protein sequence ID" value="ABG71907.1"/>
    <property type="molecule type" value="Genomic_DNA"/>
</dbReference>
<dbReference type="RefSeq" id="WP_000429386.1">
    <property type="nucleotide sequence ID" value="NC_008253.1"/>
</dbReference>
<dbReference type="SMR" id="Q0TAX2"/>
<dbReference type="GeneID" id="98390858"/>
<dbReference type="KEGG" id="ecp:ECP_3936"/>
<dbReference type="HOGENOM" id="CLU_148047_1_0_6"/>
<dbReference type="Proteomes" id="UP000009182">
    <property type="component" value="Chromosome"/>
</dbReference>
<dbReference type="GO" id="GO:0005886">
    <property type="term" value="C:plasma membrane"/>
    <property type="evidence" value="ECO:0007669"/>
    <property type="project" value="UniProtKB-SubCell"/>
</dbReference>
<dbReference type="GO" id="GO:0045259">
    <property type="term" value="C:proton-transporting ATP synthase complex"/>
    <property type="evidence" value="ECO:0007669"/>
    <property type="project" value="UniProtKB-KW"/>
</dbReference>
<dbReference type="GO" id="GO:0033177">
    <property type="term" value="C:proton-transporting two-sector ATPase complex, proton-transporting domain"/>
    <property type="evidence" value="ECO:0007669"/>
    <property type="project" value="InterPro"/>
</dbReference>
<dbReference type="GO" id="GO:0008289">
    <property type="term" value="F:lipid binding"/>
    <property type="evidence" value="ECO:0007669"/>
    <property type="project" value="UniProtKB-KW"/>
</dbReference>
<dbReference type="GO" id="GO:0046933">
    <property type="term" value="F:proton-transporting ATP synthase activity, rotational mechanism"/>
    <property type="evidence" value="ECO:0007669"/>
    <property type="project" value="UniProtKB-UniRule"/>
</dbReference>
<dbReference type="CDD" id="cd18185">
    <property type="entry name" value="ATP-synt_Fo_c_ATPE"/>
    <property type="match status" value="1"/>
</dbReference>
<dbReference type="FunFam" id="1.20.20.10:FF:000002">
    <property type="entry name" value="ATP synthase subunit c"/>
    <property type="match status" value="1"/>
</dbReference>
<dbReference type="Gene3D" id="1.20.20.10">
    <property type="entry name" value="F1F0 ATP synthase subunit C"/>
    <property type="match status" value="1"/>
</dbReference>
<dbReference type="HAMAP" id="MF_01396">
    <property type="entry name" value="ATP_synth_c_bact"/>
    <property type="match status" value="1"/>
</dbReference>
<dbReference type="InterPro" id="IPR005953">
    <property type="entry name" value="ATP_synth_csu_bac/chlpt"/>
</dbReference>
<dbReference type="InterPro" id="IPR000454">
    <property type="entry name" value="ATP_synth_F0_csu"/>
</dbReference>
<dbReference type="InterPro" id="IPR020537">
    <property type="entry name" value="ATP_synth_F0_csu_DDCD_BS"/>
</dbReference>
<dbReference type="InterPro" id="IPR038662">
    <property type="entry name" value="ATP_synth_F0_csu_sf"/>
</dbReference>
<dbReference type="InterPro" id="IPR002379">
    <property type="entry name" value="ATPase_proteolipid_c-like_dom"/>
</dbReference>
<dbReference type="InterPro" id="IPR035921">
    <property type="entry name" value="F/V-ATP_Csub_sf"/>
</dbReference>
<dbReference type="NCBIfam" id="TIGR01260">
    <property type="entry name" value="ATP_synt_c"/>
    <property type="match status" value="1"/>
</dbReference>
<dbReference type="NCBIfam" id="NF005363">
    <property type="entry name" value="PRK06876.1"/>
    <property type="match status" value="1"/>
</dbReference>
<dbReference type="Pfam" id="PF00137">
    <property type="entry name" value="ATP-synt_C"/>
    <property type="match status" value="1"/>
</dbReference>
<dbReference type="PRINTS" id="PR00124">
    <property type="entry name" value="ATPASEC"/>
</dbReference>
<dbReference type="SUPFAM" id="SSF81333">
    <property type="entry name" value="F1F0 ATP synthase subunit C"/>
    <property type="match status" value="1"/>
</dbReference>
<dbReference type="PROSITE" id="PS00605">
    <property type="entry name" value="ATPASE_C"/>
    <property type="match status" value="1"/>
</dbReference>
<comment type="function">
    <text evidence="1">F(1)F(0) ATP synthase produces ATP from ADP in the presence of a proton or sodium gradient. F-type ATPases consist of two structural domains, F(1) containing the extramembraneous catalytic core and F(0) containing the membrane proton channel, linked together by a central stalk and a peripheral stalk. During catalysis, ATP synthesis in the catalytic domain of F(1) is coupled via a rotary mechanism of the central stalk subunits to proton translocation.</text>
</comment>
<comment type="function">
    <text evidence="1">Key component of the F(0) channel; it plays a direct role in translocation across the membrane. A homomeric c-ring of between 10-14 subunits forms the central stalk rotor element with the F(1) delta and epsilon subunits.</text>
</comment>
<comment type="subunit">
    <text evidence="1">F-type ATPases have 2 components, F(1) - the catalytic core - and F(0) - the membrane proton channel. F(1) has five subunits: alpha(3), beta(3), gamma(1), delta(1), epsilon(1). F(0) has three main subunits: a(1), b(2) and c(10-14). The alpha and beta chains form an alternating ring which encloses part of the gamma chain. F(1) is attached to F(0) by a central stalk formed by the gamma and epsilon chains, while a peripheral stalk is formed by the delta and b chains.</text>
</comment>
<comment type="subcellular location">
    <subcellularLocation>
        <location evidence="1">Cell inner membrane</location>
        <topology evidence="1">Multi-pass membrane protein</topology>
    </subcellularLocation>
</comment>
<comment type="similarity">
    <text evidence="1">Belongs to the ATPase C chain family.</text>
</comment>
<proteinExistence type="inferred from homology"/>
<feature type="chain" id="PRO_1000184370" description="ATP synthase subunit c">
    <location>
        <begin position="1"/>
        <end position="79"/>
    </location>
</feature>
<feature type="transmembrane region" description="Helical" evidence="1">
    <location>
        <begin position="11"/>
        <end position="31"/>
    </location>
</feature>
<feature type="transmembrane region" description="Helical" evidence="1">
    <location>
        <begin position="53"/>
        <end position="73"/>
    </location>
</feature>
<feature type="site" description="Reversibly protonated during proton transport" evidence="1">
    <location>
        <position position="61"/>
    </location>
</feature>
<name>ATPL_ECOL5</name>
<sequence length="79" mass="8256">MENLNMDLLYMAAAVMMGLAAIGAAIGIGILGGKFLEGAARQPDLIPLLRTQFFIVMGLVDAIPMIAVGLGLYVMFAVA</sequence>
<accession>Q0TAX2</accession>